<organism>
    <name type="scientific">Saccharomyces cerevisiae (strain ATCC 204508 / S288c)</name>
    <name type="common">Baker's yeast</name>
    <dbReference type="NCBI Taxonomy" id="559292"/>
    <lineage>
        <taxon>Eukaryota</taxon>
        <taxon>Fungi</taxon>
        <taxon>Dikarya</taxon>
        <taxon>Ascomycota</taxon>
        <taxon>Saccharomycotina</taxon>
        <taxon>Saccharomycetes</taxon>
        <taxon>Saccharomycetales</taxon>
        <taxon>Saccharomycetaceae</taxon>
        <taxon>Saccharomyces</taxon>
    </lineage>
</organism>
<accession>P38243</accession>
<accession>D6VQ70</accession>
<sequence>MLRRSKNSSTNTNADTKKRQSMHLGSKSSLISLTSEFGHGHSKTKQKKEEGTAPSQFLSPTNKRSTSSQSKLKRSSLLLDETLLKDYHSAMRHMQTNAAKEEKLRMAPSPTQSTRSESDASLSSTKSSISSIFSQDNDYSIHDLLYEDIEEMDKTDAFKINNTIAIDDSKALFVFCSNDSSSRTASIETLHESNLDNLDMGSSRRTSLDFF</sequence>
<reference key="1">
    <citation type="journal article" date="1994" name="Yeast">
        <title>Sequence analysis of a 31 kb DNA fragment from the right arm of Saccharomyces cerevisiae chromosome II.</title>
        <authorList>
            <person name="van der Aart Q.J.M."/>
            <person name="Barthe C."/>
            <person name="Doignon F."/>
            <person name="Aigle M."/>
            <person name="Crouzet M."/>
            <person name="Steensma H.Y."/>
        </authorList>
    </citation>
    <scope>NUCLEOTIDE SEQUENCE [GENOMIC DNA]</scope>
    <source>
        <strain>ATCC 204508 / S288c</strain>
    </source>
</reference>
<reference key="2">
    <citation type="journal article" date="1994" name="EMBO J.">
        <title>Complete DNA sequence of yeast chromosome II.</title>
        <authorList>
            <person name="Feldmann H."/>
            <person name="Aigle M."/>
            <person name="Aljinovic G."/>
            <person name="Andre B."/>
            <person name="Baclet M.C."/>
            <person name="Barthe C."/>
            <person name="Baur A."/>
            <person name="Becam A.-M."/>
            <person name="Biteau N."/>
            <person name="Boles E."/>
            <person name="Brandt T."/>
            <person name="Brendel M."/>
            <person name="Brueckner M."/>
            <person name="Bussereau F."/>
            <person name="Christiansen C."/>
            <person name="Contreras R."/>
            <person name="Crouzet M."/>
            <person name="Cziepluch C."/>
            <person name="Demolis N."/>
            <person name="Delaveau T."/>
            <person name="Doignon F."/>
            <person name="Domdey H."/>
            <person name="Duesterhus S."/>
            <person name="Dubois E."/>
            <person name="Dujon B."/>
            <person name="El Bakkoury M."/>
            <person name="Entian K.-D."/>
            <person name="Feuermann M."/>
            <person name="Fiers W."/>
            <person name="Fobo G.M."/>
            <person name="Fritz C."/>
            <person name="Gassenhuber J."/>
            <person name="Glansdorff N."/>
            <person name="Goffeau A."/>
            <person name="Grivell L.A."/>
            <person name="de Haan M."/>
            <person name="Hein C."/>
            <person name="Herbert C.J."/>
            <person name="Hollenberg C.P."/>
            <person name="Holmstroem K."/>
            <person name="Jacq C."/>
            <person name="Jacquet M."/>
            <person name="Jauniaux J.-C."/>
            <person name="Jonniaux J.-L."/>
            <person name="Kallesoee T."/>
            <person name="Kiesau P."/>
            <person name="Kirchrath L."/>
            <person name="Koetter P."/>
            <person name="Korol S."/>
            <person name="Liebl S."/>
            <person name="Logghe M."/>
            <person name="Lohan A.J.E."/>
            <person name="Louis E.J."/>
            <person name="Li Z.Y."/>
            <person name="Maat M.J."/>
            <person name="Mallet L."/>
            <person name="Mannhaupt G."/>
            <person name="Messenguy F."/>
            <person name="Miosga T."/>
            <person name="Molemans F."/>
            <person name="Mueller S."/>
            <person name="Nasr F."/>
            <person name="Obermaier B."/>
            <person name="Perea J."/>
            <person name="Pierard A."/>
            <person name="Piravandi E."/>
            <person name="Pohl F.M."/>
            <person name="Pohl T.M."/>
            <person name="Potier S."/>
            <person name="Proft M."/>
            <person name="Purnelle B."/>
            <person name="Ramezani Rad M."/>
            <person name="Rieger M."/>
            <person name="Rose M."/>
            <person name="Schaaff-Gerstenschlaeger I."/>
            <person name="Scherens B."/>
            <person name="Schwarzlose C."/>
            <person name="Skala J."/>
            <person name="Slonimski P.P."/>
            <person name="Smits P.H.M."/>
            <person name="Souciet J.-L."/>
            <person name="Steensma H.Y."/>
            <person name="Stucka R."/>
            <person name="Urrestarazu L.A."/>
            <person name="van der Aart Q.J.M."/>
            <person name="Van Dyck L."/>
            <person name="Vassarotti A."/>
            <person name="Vetter I."/>
            <person name="Vierendeels F."/>
            <person name="Vissers S."/>
            <person name="Wagner G."/>
            <person name="de Wergifosse P."/>
            <person name="Wolfe K.H."/>
            <person name="Zagulski M."/>
            <person name="Zimmermann F.K."/>
            <person name="Mewes H.-W."/>
            <person name="Kleine K."/>
        </authorList>
    </citation>
    <scope>NUCLEOTIDE SEQUENCE [LARGE SCALE GENOMIC DNA]</scope>
    <source>
        <strain>ATCC 204508 / S288c</strain>
    </source>
</reference>
<reference key="3">
    <citation type="journal article" date="2014" name="G3 (Bethesda)">
        <title>The reference genome sequence of Saccharomyces cerevisiae: Then and now.</title>
        <authorList>
            <person name="Engel S.R."/>
            <person name="Dietrich F.S."/>
            <person name="Fisk D.G."/>
            <person name="Binkley G."/>
            <person name="Balakrishnan R."/>
            <person name="Costanzo M.C."/>
            <person name="Dwight S.S."/>
            <person name="Hitz B.C."/>
            <person name="Karra K."/>
            <person name="Nash R.S."/>
            <person name="Weng S."/>
            <person name="Wong E.D."/>
            <person name="Lloyd P."/>
            <person name="Skrzypek M.S."/>
            <person name="Miyasato S.R."/>
            <person name="Simison M."/>
            <person name="Cherry J.M."/>
        </authorList>
    </citation>
    <scope>GENOME REANNOTATION</scope>
    <source>
        <strain>ATCC 204508 / S288c</strain>
    </source>
</reference>
<reference key="4">
    <citation type="journal article" date="2003" name="Nature">
        <title>Global analysis of protein expression in yeast.</title>
        <authorList>
            <person name="Ghaemmaghami S."/>
            <person name="Huh W.-K."/>
            <person name="Bower K."/>
            <person name="Howson R.W."/>
            <person name="Belle A."/>
            <person name="Dephoure N."/>
            <person name="O'Shea E.K."/>
            <person name="Weissman J.S."/>
        </authorList>
    </citation>
    <scope>LEVEL OF PROTEIN EXPRESSION [LARGE SCALE ANALYSIS]</scope>
</reference>
<reference key="5">
    <citation type="journal article" date="2009" name="Science">
        <title>Global analysis of Cdk1 substrate phosphorylation sites provides insights into evolution.</title>
        <authorList>
            <person name="Holt L.J."/>
            <person name="Tuch B.B."/>
            <person name="Villen J."/>
            <person name="Johnson A.D."/>
            <person name="Gygi S.P."/>
            <person name="Morgan D.O."/>
        </authorList>
    </citation>
    <scope>PHOSPHORYLATION [LARGE SCALE ANALYSIS] AT SER-182; THR-184 AND SER-186</scope>
    <scope>IDENTIFICATION BY MASS SPECTROMETRY [LARGE SCALE ANALYSIS]</scope>
</reference>
<feature type="chain" id="PRO_0000202478" description="Uncharacterized protein YBR071W">
    <location>
        <begin position="1"/>
        <end position="211"/>
    </location>
</feature>
<feature type="region of interest" description="Disordered" evidence="1">
    <location>
        <begin position="1"/>
        <end position="73"/>
    </location>
</feature>
<feature type="region of interest" description="Disordered" evidence="1">
    <location>
        <begin position="96"/>
        <end position="123"/>
    </location>
</feature>
<feature type="compositionally biased region" description="Polar residues" evidence="1">
    <location>
        <begin position="26"/>
        <end position="35"/>
    </location>
</feature>
<feature type="compositionally biased region" description="Polar residues" evidence="1">
    <location>
        <begin position="53"/>
        <end position="62"/>
    </location>
</feature>
<feature type="compositionally biased region" description="Low complexity" evidence="1">
    <location>
        <begin position="63"/>
        <end position="73"/>
    </location>
</feature>
<feature type="modified residue" description="Phosphoserine" evidence="3">
    <location>
        <position position="182"/>
    </location>
</feature>
<feature type="modified residue" description="Phosphothreonine" evidence="3">
    <location>
        <position position="184"/>
    </location>
</feature>
<feature type="modified residue" description="Phosphoserine" evidence="3">
    <location>
        <position position="186"/>
    </location>
</feature>
<proteinExistence type="evidence at protein level"/>
<comment type="miscellaneous">
    <text evidence="2">Present with 1200 molecules/cell in log phase SD medium.</text>
</comment>
<name>YBS1_YEAST</name>
<evidence type="ECO:0000256" key="1">
    <source>
        <dbReference type="SAM" id="MobiDB-lite"/>
    </source>
</evidence>
<evidence type="ECO:0000269" key="2">
    <source>
    </source>
</evidence>
<evidence type="ECO:0007744" key="3">
    <source>
    </source>
</evidence>
<dbReference type="EMBL" id="X76294">
    <property type="protein sequence ID" value="CAA53928.1"/>
    <property type="molecule type" value="Genomic_DNA"/>
</dbReference>
<dbReference type="EMBL" id="Z35940">
    <property type="protein sequence ID" value="CAA85015.1"/>
    <property type="molecule type" value="Genomic_DNA"/>
</dbReference>
<dbReference type="EMBL" id="BK006936">
    <property type="protein sequence ID" value="DAA07190.1"/>
    <property type="molecule type" value="Genomic_DNA"/>
</dbReference>
<dbReference type="PIR" id="S45464">
    <property type="entry name" value="S45464"/>
</dbReference>
<dbReference type="RefSeq" id="NP_009627.3">
    <property type="nucleotide sequence ID" value="NM_001178419.3"/>
</dbReference>
<dbReference type="BioGRID" id="32774">
    <property type="interactions" value="105"/>
</dbReference>
<dbReference type="FunCoup" id="P38243">
    <property type="interactions" value="61"/>
</dbReference>
<dbReference type="IntAct" id="P38243">
    <property type="interactions" value="3"/>
</dbReference>
<dbReference type="MINT" id="P38243"/>
<dbReference type="STRING" id="4932.YBR071W"/>
<dbReference type="GlyGen" id="P38243">
    <property type="glycosylation" value="1 site"/>
</dbReference>
<dbReference type="iPTMnet" id="P38243"/>
<dbReference type="PaxDb" id="4932-YBR071W"/>
<dbReference type="PeptideAtlas" id="P38243"/>
<dbReference type="EnsemblFungi" id="YBR071W_mRNA">
    <property type="protein sequence ID" value="YBR071W"/>
    <property type="gene ID" value="YBR071W"/>
</dbReference>
<dbReference type="GeneID" id="852363"/>
<dbReference type="KEGG" id="sce:YBR071W"/>
<dbReference type="AGR" id="SGD:S000000275"/>
<dbReference type="SGD" id="S000000275">
    <property type="gene designation" value="YBR071W"/>
</dbReference>
<dbReference type="VEuPathDB" id="FungiDB:YBR071W"/>
<dbReference type="eggNOG" id="ENOG502SCD0">
    <property type="taxonomic scope" value="Eukaryota"/>
</dbReference>
<dbReference type="HOGENOM" id="CLU_1305732_0_0_1"/>
<dbReference type="InParanoid" id="P38243"/>
<dbReference type="OMA" id="MDKTTDA"/>
<dbReference type="OrthoDB" id="4061787at2759"/>
<dbReference type="BioCyc" id="YEAST:G3O-29040-MONOMER"/>
<dbReference type="BioGRID-ORCS" id="852363">
    <property type="hits" value="0 hits in 10 CRISPR screens"/>
</dbReference>
<dbReference type="PRO" id="PR:P38243"/>
<dbReference type="Proteomes" id="UP000002311">
    <property type="component" value="Chromosome II"/>
</dbReference>
<dbReference type="RNAct" id="P38243">
    <property type="molecule type" value="protein"/>
</dbReference>
<dbReference type="GO" id="GO:0005935">
    <property type="term" value="C:cellular bud neck"/>
    <property type="evidence" value="ECO:0000314"/>
    <property type="project" value="SGD"/>
</dbReference>
<dbReference type="GO" id="GO:0005737">
    <property type="term" value="C:cytoplasm"/>
    <property type="evidence" value="ECO:0000314"/>
    <property type="project" value="SGD"/>
</dbReference>
<keyword id="KW-0597">Phosphoprotein</keyword>
<keyword id="KW-1185">Reference proteome</keyword>
<protein>
    <recommendedName>
        <fullName>Uncharacterized protein YBR071W</fullName>
    </recommendedName>
</protein>
<gene>
    <name type="ordered locus">YBR071W</name>
    <name type="ORF">YBR0712</name>
</gene>